<dbReference type="EC" id="4.2.1.109" evidence="1"/>
<dbReference type="EMBL" id="CH476597">
    <property type="protein sequence ID" value="EAU36439.1"/>
    <property type="molecule type" value="Genomic_DNA"/>
</dbReference>
<dbReference type="RefSeq" id="XP_001212343.1">
    <property type="nucleotide sequence ID" value="XM_001212343.1"/>
</dbReference>
<dbReference type="SMR" id="Q0CT19"/>
<dbReference type="STRING" id="341663.Q0CT19"/>
<dbReference type="EnsemblFungi" id="EAU36439">
    <property type="protein sequence ID" value="EAU36439"/>
    <property type="gene ID" value="ATEG_03165"/>
</dbReference>
<dbReference type="GeneID" id="4317587"/>
<dbReference type="VEuPathDB" id="FungiDB:ATEG_03165"/>
<dbReference type="eggNOG" id="KOG2631">
    <property type="taxonomic scope" value="Eukaryota"/>
</dbReference>
<dbReference type="HOGENOM" id="CLU_006033_4_0_1"/>
<dbReference type="OMA" id="WFPGTSG"/>
<dbReference type="OrthoDB" id="191080at2759"/>
<dbReference type="UniPathway" id="UPA00904">
    <property type="reaction ID" value="UER00875"/>
</dbReference>
<dbReference type="Proteomes" id="UP000007963">
    <property type="component" value="Unassembled WGS sequence"/>
</dbReference>
<dbReference type="GO" id="GO:0005737">
    <property type="term" value="C:cytoplasm"/>
    <property type="evidence" value="ECO:0007669"/>
    <property type="project" value="UniProtKB-SubCell"/>
</dbReference>
<dbReference type="GO" id="GO:0046570">
    <property type="term" value="F:methylthioribulose 1-phosphate dehydratase activity"/>
    <property type="evidence" value="ECO:0007669"/>
    <property type="project" value="UniProtKB-UniRule"/>
</dbReference>
<dbReference type="GO" id="GO:0008270">
    <property type="term" value="F:zinc ion binding"/>
    <property type="evidence" value="ECO:0007669"/>
    <property type="project" value="UniProtKB-UniRule"/>
</dbReference>
<dbReference type="GO" id="GO:0019509">
    <property type="term" value="P:L-methionine salvage from methylthioadenosine"/>
    <property type="evidence" value="ECO:0007669"/>
    <property type="project" value="UniProtKB-UniRule"/>
</dbReference>
<dbReference type="FunFam" id="3.40.225.10:FF:000003">
    <property type="entry name" value="Methylthioribulose-1-phosphate dehydratase"/>
    <property type="match status" value="1"/>
</dbReference>
<dbReference type="Gene3D" id="3.40.225.10">
    <property type="entry name" value="Class II aldolase/adducin N-terminal domain"/>
    <property type="match status" value="1"/>
</dbReference>
<dbReference type="HAMAP" id="MF_03116">
    <property type="entry name" value="Salvage_MtnB_euk"/>
    <property type="match status" value="1"/>
</dbReference>
<dbReference type="InterPro" id="IPR001303">
    <property type="entry name" value="Aldolase_II/adducin_N"/>
</dbReference>
<dbReference type="InterPro" id="IPR036409">
    <property type="entry name" value="Aldolase_II/adducin_N_sf"/>
</dbReference>
<dbReference type="InterPro" id="IPR017714">
    <property type="entry name" value="MethylthioRu-1-P_deHdtase_MtnB"/>
</dbReference>
<dbReference type="InterPro" id="IPR027514">
    <property type="entry name" value="Salvage_MtnB_euk"/>
</dbReference>
<dbReference type="NCBIfam" id="TIGR03328">
    <property type="entry name" value="salvage_mtnB"/>
    <property type="match status" value="1"/>
</dbReference>
<dbReference type="PANTHER" id="PTHR10640">
    <property type="entry name" value="METHYLTHIORIBULOSE-1-PHOSPHATE DEHYDRATASE"/>
    <property type="match status" value="1"/>
</dbReference>
<dbReference type="PANTHER" id="PTHR10640:SF7">
    <property type="entry name" value="METHYLTHIORIBULOSE-1-PHOSPHATE DEHYDRATASE"/>
    <property type="match status" value="1"/>
</dbReference>
<dbReference type="Pfam" id="PF00596">
    <property type="entry name" value="Aldolase_II"/>
    <property type="match status" value="1"/>
</dbReference>
<dbReference type="SMART" id="SM01007">
    <property type="entry name" value="Aldolase_II"/>
    <property type="match status" value="1"/>
</dbReference>
<dbReference type="SUPFAM" id="SSF53639">
    <property type="entry name" value="AraD/HMP-PK domain-like"/>
    <property type="match status" value="1"/>
</dbReference>
<comment type="function">
    <text evidence="1">Catalyzes the dehydration of methylthioribulose-1-phosphate (MTRu-1-P) into 2,3-diketo-5-methylthiopentyl-1-phosphate (DK-MTP-1-P).</text>
</comment>
<comment type="catalytic activity">
    <reaction evidence="1">
        <text>5-(methylsulfanyl)-D-ribulose 1-phosphate = 5-methylsulfanyl-2,3-dioxopentyl phosphate + H2O</text>
        <dbReference type="Rhea" id="RHEA:15549"/>
        <dbReference type="ChEBI" id="CHEBI:15377"/>
        <dbReference type="ChEBI" id="CHEBI:58548"/>
        <dbReference type="ChEBI" id="CHEBI:58828"/>
        <dbReference type="EC" id="4.2.1.109"/>
    </reaction>
</comment>
<comment type="cofactor">
    <cofactor evidence="1">
        <name>Zn(2+)</name>
        <dbReference type="ChEBI" id="CHEBI:29105"/>
    </cofactor>
    <text evidence="1">Binds 1 zinc ion per subunit.</text>
</comment>
<comment type="pathway">
    <text evidence="1">Amino-acid biosynthesis; L-methionine biosynthesis via salvage pathway; L-methionine from S-methyl-5-thio-alpha-D-ribose 1-phosphate: step 2/6.</text>
</comment>
<comment type="subcellular location">
    <subcellularLocation>
        <location evidence="1">Cytoplasm</location>
    </subcellularLocation>
</comment>
<comment type="similarity">
    <text evidence="1">Belongs to the aldolase class II family. MtnB subfamily.</text>
</comment>
<organism>
    <name type="scientific">Aspergillus terreus (strain NIH 2624 / FGSC A1156)</name>
    <dbReference type="NCBI Taxonomy" id="341663"/>
    <lineage>
        <taxon>Eukaryota</taxon>
        <taxon>Fungi</taxon>
        <taxon>Dikarya</taxon>
        <taxon>Ascomycota</taxon>
        <taxon>Pezizomycotina</taxon>
        <taxon>Eurotiomycetes</taxon>
        <taxon>Eurotiomycetidae</taxon>
        <taxon>Eurotiales</taxon>
        <taxon>Aspergillaceae</taxon>
        <taxon>Aspergillus</taxon>
        <taxon>Aspergillus subgen. Circumdati</taxon>
    </lineage>
</organism>
<gene>
    <name evidence="1" type="primary">mde1</name>
    <name type="ORF">ATEG_03165</name>
</gene>
<protein>
    <recommendedName>
        <fullName evidence="1">Methylthioribulose-1-phosphate dehydratase</fullName>
        <shortName evidence="1">MTRu-1-P dehydratase</shortName>
        <ecNumber evidence="1">4.2.1.109</ecNumber>
    </recommendedName>
</protein>
<evidence type="ECO:0000255" key="1">
    <source>
        <dbReference type="HAMAP-Rule" id="MF_03116"/>
    </source>
</evidence>
<evidence type="ECO:0000256" key="2">
    <source>
        <dbReference type="SAM" id="MobiDB-lite"/>
    </source>
</evidence>
<accession>Q0CT19</accession>
<name>MTNB_ASPTN</name>
<reference key="1">
    <citation type="submission" date="2005-09" db="EMBL/GenBank/DDBJ databases">
        <title>Annotation of the Aspergillus terreus NIH2624 genome.</title>
        <authorList>
            <person name="Birren B.W."/>
            <person name="Lander E.S."/>
            <person name="Galagan J.E."/>
            <person name="Nusbaum C."/>
            <person name="Devon K."/>
            <person name="Henn M."/>
            <person name="Ma L.-J."/>
            <person name="Jaffe D.B."/>
            <person name="Butler J."/>
            <person name="Alvarez P."/>
            <person name="Gnerre S."/>
            <person name="Grabherr M."/>
            <person name="Kleber M."/>
            <person name="Mauceli E.W."/>
            <person name="Brockman W."/>
            <person name="Rounsley S."/>
            <person name="Young S.K."/>
            <person name="LaButti K."/>
            <person name="Pushparaj V."/>
            <person name="DeCaprio D."/>
            <person name="Crawford M."/>
            <person name="Koehrsen M."/>
            <person name="Engels R."/>
            <person name="Montgomery P."/>
            <person name="Pearson M."/>
            <person name="Howarth C."/>
            <person name="Larson L."/>
            <person name="Luoma S."/>
            <person name="White J."/>
            <person name="Alvarado L."/>
            <person name="Kodira C.D."/>
            <person name="Zeng Q."/>
            <person name="Oleary S."/>
            <person name="Yandava C."/>
            <person name="Denning D.W."/>
            <person name="Nierman W.C."/>
            <person name="Milne T."/>
            <person name="Madden K."/>
        </authorList>
    </citation>
    <scope>NUCLEOTIDE SEQUENCE [LARGE SCALE GENOMIC DNA]</scope>
    <source>
        <strain>NIH 2624 / FGSC A1156</strain>
    </source>
</reference>
<keyword id="KW-0028">Amino-acid biosynthesis</keyword>
<keyword id="KW-0963">Cytoplasm</keyword>
<keyword id="KW-0456">Lyase</keyword>
<keyword id="KW-0479">Metal-binding</keyword>
<keyword id="KW-0486">Methionine biosynthesis</keyword>
<keyword id="KW-1185">Reference proteome</keyword>
<keyword id="KW-0862">Zinc</keyword>
<sequence>MSQEITQKDNNDHLVQSSDPDHPANMIPDLCRKFYNWGWVTGTGGGTSIRRGDHIFIAPSGVQKELMQPHNIFVLEFPTPKYPPSDRKYIRKPLDLKPSACTPLFLAAFERGAGCCIHTHSQWAVLVTLLVEREKGPGGYFEISNIEQIKGIPRGKGKGMMGFHDTLRIPIIENTAFEEDLTGSLEKAMEENPDTYAVLVKRHGIYVWGDDVAKAKTQCESLDYLFQLAVEMHKLGLPWVK</sequence>
<feature type="chain" id="PRO_0000393811" description="Methylthioribulose-1-phosphate dehydratase">
    <location>
        <begin position="1"/>
        <end position="241"/>
    </location>
</feature>
<feature type="region of interest" description="Disordered" evidence="2">
    <location>
        <begin position="1"/>
        <end position="22"/>
    </location>
</feature>
<feature type="compositionally biased region" description="Basic and acidic residues" evidence="2">
    <location>
        <begin position="1"/>
        <end position="12"/>
    </location>
</feature>
<feature type="active site" description="Proton donor/acceptor" evidence="1">
    <location>
        <position position="147"/>
    </location>
</feature>
<feature type="binding site" evidence="1">
    <location>
        <position position="101"/>
    </location>
    <ligand>
        <name>substrate</name>
    </ligand>
</feature>
<feature type="binding site" evidence="1">
    <location>
        <position position="118"/>
    </location>
    <ligand>
        <name>Zn(2+)</name>
        <dbReference type="ChEBI" id="CHEBI:29105"/>
    </ligand>
</feature>
<feature type="binding site" evidence="1">
    <location>
        <position position="120"/>
    </location>
    <ligand>
        <name>Zn(2+)</name>
        <dbReference type="ChEBI" id="CHEBI:29105"/>
    </ligand>
</feature>
<feature type="binding site" evidence="1">
    <location>
        <position position="203"/>
    </location>
    <ligand>
        <name>Zn(2+)</name>
        <dbReference type="ChEBI" id="CHEBI:29105"/>
    </ligand>
</feature>
<proteinExistence type="inferred from homology"/>